<organism>
    <name type="scientific">Arabidopsis thaliana</name>
    <name type="common">Mouse-ear cress</name>
    <dbReference type="NCBI Taxonomy" id="3702"/>
    <lineage>
        <taxon>Eukaryota</taxon>
        <taxon>Viridiplantae</taxon>
        <taxon>Streptophyta</taxon>
        <taxon>Embryophyta</taxon>
        <taxon>Tracheophyta</taxon>
        <taxon>Spermatophyta</taxon>
        <taxon>Magnoliopsida</taxon>
        <taxon>eudicotyledons</taxon>
        <taxon>Gunneridae</taxon>
        <taxon>Pentapetalae</taxon>
        <taxon>rosids</taxon>
        <taxon>malvids</taxon>
        <taxon>Brassicales</taxon>
        <taxon>Brassicaceae</taxon>
        <taxon>Camelineae</taxon>
        <taxon>Arabidopsis</taxon>
    </lineage>
</organism>
<proteinExistence type="evidence at transcript level"/>
<name>AB17I_ARATH</name>
<dbReference type="EMBL" id="AC012563">
    <property type="protein sequence ID" value="AAG52004.1"/>
    <property type="molecule type" value="Genomic_DNA"/>
</dbReference>
<dbReference type="EMBL" id="CP002684">
    <property type="protein sequence ID" value="AEE34724.1"/>
    <property type="molecule type" value="Genomic_DNA"/>
</dbReference>
<dbReference type="EMBL" id="AK117705">
    <property type="protein sequence ID" value="BAC42356.1"/>
    <property type="molecule type" value="mRNA"/>
</dbReference>
<dbReference type="EMBL" id="BT005105">
    <property type="protein sequence ID" value="AAO50638.1"/>
    <property type="molecule type" value="mRNA"/>
</dbReference>
<dbReference type="EMBL" id="AY086511">
    <property type="protein sequence ID" value="AAM63511.1"/>
    <property type="molecule type" value="mRNA"/>
</dbReference>
<dbReference type="PIR" id="C96702">
    <property type="entry name" value="C96702"/>
</dbReference>
<dbReference type="RefSeq" id="NP_176961.1">
    <property type="nucleotide sequence ID" value="NM_105464.3"/>
</dbReference>
<dbReference type="SMR" id="Q9C9W0"/>
<dbReference type="BioGRID" id="28343">
    <property type="interactions" value="1"/>
</dbReference>
<dbReference type="FunCoup" id="Q9C9W0">
    <property type="interactions" value="29"/>
</dbReference>
<dbReference type="IntAct" id="Q9C9W0">
    <property type="interactions" value="1"/>
</dbReference>
<dbReference type="STRING" id="3702.Q9C9W0"/>
<dbReference type="TCDB" id="3.A.1.139.4">
    <property type="family name" value="the atp-binding cassette (abc) superfamily"/>
</dbReference>
<dbReference type="iPTMnet" id="Q9C9W0"/>
<dbReference type="PaxDb" id="3702-AT1G67940.1"/>
<dbReference type="ProteomicsDB" id="245110"/>
<dbReference type="EnsemblPlants" id="AT1G67940.1">
    <property type="protein sequence ID" value="AT1G67940.1"/>
    <property type="gene ID" value="AT1G67940"/>
</dbReference>
<dbReference type="GeneID" id="843122"/>
<dbReference type="Gramene" id="AT1G67940.1">
    <property type="protein sequence ID" value="AT1G67940.1"/>
    <property type="gene ID" value="AT1G67940"/>
</dbReference>
<dbReference type="KEGG" id="ath:AT1G67940"/>
<dbReference type="Araport" id="AT1G67940"/>
<dbReference type="TAIR" id="AT1G67940">
    <property type="gene designation" value="ABCI17"/>
</dbReference>
<dbReference type="eggNOG" id="KOG0055">
    <property type="taxonomic scope" value="Eukaryota"/>
</dbReference>
<dbReference type="HOGENOM" id="CLU_000604_1_22_1"/>
<dbReference type="InParanoid" id="Q9C9W0"/>
<dbReference type="OMA" id="TMSIYEN"/>
<dbReference type="OrthoDB" id="6593433at2759"/>
<dbReference type="PhylomeDB" id="Q9C9W0"/>
<dbReference type="PRO" id="PR:Q9C9W0"/>
<dbReference type="Proteomes" id="UP000006548">
    <property type="component" value="Chromosome 1"/>
</dbReference>
<dbReference type="ExpressionAtlas" id="Q9C9W0">
    <property type="expression patterns" value="baseline and differential"/>
</dbReference>
<dbReference type="GO" id="GO:0000325">
    <property type="term" value="C:plant-type vacuole"/>
    <property type="evidence" value="ECO:0007005"/>
    <property type="project" value="TAIR"/>
</dbReference>
<dbReference type="GO" id="GO:0005886">
    <property type="term" value="C:plasma membrane"/>
    <property type="evidence" value="ECO:0007005"/>
    <property type="project" value="TAIR"/>
</dbReference>
<dbReference type="GO" id="GO:0005524">
    <property type="term" value="F:ATP binding"/>
    <property type="evidence" value="ECO:0007669"/>
    <property type="project" value="UniProtKB-KW"/>
</dbReference>
<dbReference type="GO" id="GO:0016887">
    <property type="term" value="F:ATP hydrolysis activity"/>
    <property type="evidence" value="ECO:0007669"/>
    <property type="project" value="InterPro"/>
</dbReference>
<dbReference type="GO" id="GO:0005315">
    <property type="term" value="F:phosphate transmembrane transporter activity"/>
    <property type="evidence" value="ECO:0007669"/>
    <property type="project" value="InterPro"/>
</dbReference>
<dbReference type="GO" id="GO:0035435">
    <property type="term" value="P:phosphate ion transmembrane transport"/>
    <property type="evidence" value="ECO:0007669"/>
    <property type="project" value="InterPro"/>
</dbReference>
<dbReference type="CDD" id="cd03260">
    <property type="entry name" value="ABC_PstB_phosphate_transporter"/>
    <property type="match status" value="1"/>
</dbReference>
<dbReference type="FunFam" id="3.40.50.300:FF:001209">
    <property type="entry name" value="ABC transporter, ATP-binding protein"/>
    <property type="match status" value="1"/>
</dbReference>
<dbReference type="Gene3D" id="3.40.50.300">
    <property type="entry name" value="P-loop containing nucleotide triphosphate hydrolases"/>
    <property type="match status" value="1"/>
</dbReference>
<dbReference type="InterPro" id="IPR003593">
    <property type="entry name" value="AAA+_ATPase"/>
</dbReference>
<dbReference type="InterPro" id="IPR003439">
    <property type="entry name" value="ABC_transporter-like_ATP-bd"/>
</dbReference>
<dbReference type="InterPro" id="IPR017871">
    <property type="entry name" value="ABC_transporter-like_CS"/>
</dbReference>
<dbReference type="InterPro" id="IPR027417">
    <property type="entry name" value="P-loop_NTPase"/>
</dbReference>
<dbReference type="InterPro" id="IPR005670">
    <property type="entry name" value="PstB-like"/>
</dbReference>
<dbReference type="PANTHER" id="PTHR43423">
    <property type="entry name" value="ABC TRANSPORTER I FAMILY MEMBER 17"/>
    <property type="match status" value="1"/>
</dbReference>
<dbReference type="PANTHER" id="PTHR43423:SF1">
    <property type="entry name" value="ABC TRANSPORTER I FAMILY MEMBER 17"/>
    <property type="match status" value="1"/>
</dbReference>
<dbReference type="Pfam" id="PF00005">
    <property type="entry name" value="ABC_tran"/>
    <property type="match status" value="1"/>
</dbReference>
<dbReference type="SMART" id="SM00382">
    <property type="entry name" value="AAA"/>
    <property type="match status" value="1"/>
</dbReference>
<dbReference type="SUPFAM" id="SSF52540">
    <property type="entry name" value="P-loop containing nucleoside triphosphate hydrolases"/>
    <property type="match status" value="1"/>
</dbReference>
<dbReference type="PROSITE" id="PS00211">
    <property type="entry name" value="ABC_TRANSPORTER_1"/>
    <property type="match status" value="1"/>
</dbReference>
<dbReference type="PROSITE" id="PS50893">
    <property type="entry name" value="ABC_TRANSPORTER_2"/>
    <property type="match status" value="1"/>
</dbReference>
<reference key="1">
    <citation type="journal article" date="2000" name="Nature">
        <title>Sequence and analysis of chromosome 1 of the plant Arabidopsis thaliana.</title>
        <authorList>
            <person name="Theologis A."/>
            <person name="Ecker J.R."/>
            <person name="Palm C.J."/>
            <person name="Federspiel N.A."/>
            <person name="Kaul S."/>
            <person name="White O."/>
            <person name="Alonso J."/>
            <person name="Altafi H."/>
            <person name="Araujo R."/>
            <person name="Bowman C.L."/>
            <person name="Brooks S.Y."/>
            <person name="Buehler E."/>
            <person name="Chan A."/>
            <person name="Chao Q."/>
            <person name="Chen H."/>
            <person name="Cheuk R.F."/>
            <person name="Chin C.W."/>
            <person name="Chung M.K."/>
            <person name="Conn L."/>
            <person name="Conway A.B."/>
            <person name="Conway A.R."/>
            <person name="Creasy T.H."/>
            <person name="Dewar K."/>
            <person name="Dunn P."/>
            <person name="Etgu P."/>
            <person name="Feldblyum T.V."/>
            <person name="Feng J.-D."/>
            <person name="Fong B."/>
            <person name="Fujii C.Y."/>
            <person name="Gill J.E."/>
            <person name="Goldsmith A.D."/>
            <person name="Haas B."/>
            <person name="Hansen N.F."/>
            <person name="Hughes B."/>
            <person name="Huizar L."/>
            <person name="Hunter J.L."/>
            <person name="Jenkins J."/>
            <person name="Johnson-Hopson C."/>
            <person name="Khan S."/>
            <person name="Khaykin E."/>
            <person name="Kim C.J."/>
            <person name="Koo H.L."/>
            <person name="Kremenetskaia I."/>
            <person name="Kurtz D.B."/>
            <person name="Kwan A."/>
            <person name="Lam B."/>
            <person name="Langin-Hooper S."/>
            <person name="Lee A."/>
            <person name="Lee J.M."/>
            <person name="Lenz C.A."/>
            <person name="Li J.H."/>
            <person name="Li Y.-P."/>
            <person name="Lin X."/>
            <person name="Liu S.X."/>
            <person name="Liu Z.A."/>
            <person name="Luros J.S."/>
            <person name="Maiti R."/>
            <person name="Marziali A."/>
            <person name="Militscher J."/>
            <person name="Miranda M."/>
            <person name="Nguyen M."/>
            <person name="Nierman W.C."/>
            <person name="Osborne B.I."/>
            <person name="Pai G."/>
            <person name="Peterson J."/>
            <person name="Pham P.K."/>
            <person name="Rizzo M."/>
            <person name="Rooney T."/>
            <person name="Rowley D."/>
            <person name="Sakano H."/>
            <person name="Salzberg S.L."/>
            <person name="Schwartz J.R."/>
            <person name="Shinn P."/>
            <person name="Southwick A.M."/>
            <person name="Sun H."/>
            <person name="Tallon L.J."/>
            <person name="Tambunga G."/>
            <person name="Toriumi M.J."/>
            <person name="Town C.D."/>
            <person name="Utterback T."/>
            <person name="Van Aken S."/>
            <person name="Vaysberg M."/>
            <person name="Vysotskaia V.S."/>
            <person name="Walker M."/>
            <person name="Wu D."/>
            <person name="Yu G."/>
            <person name="Fraser C.M."/>
            <person name="Venter J.C."/>
            <person name="Davis R.W."/>
        </authorList>
    </citation>
    <scope>NUCLEOTIDE SEQUENCE [LARGE SCALE GENOMIC DNA]</scope>
    <source>
        <strain>cv. Columbia</strain>
    </source>
</reference>
<reference key="2">
    <citation type="journal article" date="2017" name="Plant J.">
        <title>Araport11: a complete reannotation of the Arabidopsis thaliana reference genome.</title>
        <authorList>
            <person name="Cheng C.Y."/>
            <person name="Krishnakumar V."/>
            <person name="Chan A.P."/>
            <person name="Thibaud-Nissen F."/>
            <person name="Schobel S."/>
            <person name="Town C.D."/>
        </authorList>
    </citation>
    <scope>GENOME REANNOTATION</scope>
    <source>
        <strain>cv. Columbia</strain>
    </source>
</reference>
<reference key="3">
    <citation type="journal article" date="2002" name="Science">
        <title>Functional annotation of a full-length Arabidopsis cDNA collection.</title>
        <authorList>
            <person name="Seki M."/>
            <person name="Narusaka M."/>
            <person name="Kamiya A."/>
            <person name="Ishida J."/>
            <person name="Satou M."/>
            <person name="Sakurai T."/>
            <person name="Nakajima M."/>
            <person name="Enju A."/>
            <person name="Akiyama K."/>
            <person name="Oono Y."/>
            <person name="Muramatsu M."/>
            <person name="Hayashizaki Y."/>
            <person name="Kawai J."/>
            <person name="Carninci P."/>
            <person name="Itoh M."/>
            <person name="Ishii Y."/>
            <person name="Arakawa T."/>
            <person name="Shibata K."/>
            <person name="Shinagawa A."/>
            <person name="Shinozaki K."/>
        </authorList>
    </citation>
    <scope>NUCLEOTIDE SEQUENCE [LARGE SCALE MRNA]</scope>
    <source>
        <strain>cv. Columbia</strain>
    </source>
</reference>
<reference key="4">
    <citation type="journal article" date="2003" name="Science">
        <title>Empirical analysis of transcriptional activity in the Arabidopsis genome.</title>
        <authorList>
            <person name="Yamada K."/>
            <person name="Lim J."/>
            <person name="Dale J.M."/>
            <person name="Chen H."/>
            <person name="Shinn P."/>
            <person name="Palm C.J."/>
            <person name="Southwick A.M."/>
            <person name="Wu H.C."/>
            <person name="Kim C.J."/>
            <person name="Nguyen M."/>
            <person name="Pham P.K."/>
            <person name="Cheuk R.F."/>
            <person name="Karlin-Newmann G."/>
            <person name="Liu S.X."/>
            <person name="Lam B."/>
            <person name="Sakano H."/>
            <person name="Wu T."/>
            <person name="Yu G."/>
            <person name="Miranda M."/>
            <person name="Quach H.L."/>
            <person name="Tripp M."/>
            <person name="Chang C.H."/>
            <person name="Lee J.M."/>
            <person name="Toriumi M.J."/>
            <person name="Chan M.M."/>
            <person name="Tang C.C."/>
            <person name="Onodera C.S."/>
            <person name="Deng J.M."/>
            <person name="Akiyama K."/>
            <person name="Ansari Y."/>
            <person name="Arakawa T."/>
            <person name="Banh J."/>
            <person name="Banno F."/>
            <person name="Bowser L."/>
            <person name="Brooks S.Y."/>
            <person name="Carninci P."/>
            <person name="Chao Q."/>
            <person name="Choy N."/>
            <person name="Enju A."/>
            <person name="Goldsmith A.D."/>
            <person name="Gurjal M."/>
            <person name="Hansen N.F."/>
            <person name="Hayashizaki Y."/>
            <person name="Johnson-Hopson C."/>
            <person name="Hsuan V.W."/>
            <person name="Iida K."/>
            <person name="Karnes M."/>
            <person name="Khan S."/>
            <person name="Koesema E."/>
            <person name="Ishida J."/>
            <person name="Jiang P.X."/>
            <person name="Jones T."/>
            <person name="Kawai J."/>
            <person name="Kamiya A."/>
            <person name="Meyers C."/>
            <person name="Nakajima M."/>
            <person name="Narusaka M."/>
            <person name="Seki M."/>
            <person name="Sakurai T."/>
            <person name="Satou M."/>
            <person name="Tamse R."/>
            <person name="Vaysberg M."/>
            <person name="Wallender E.K."/>
            <person name="Wong C."/>
            <person name="Yamamura Y."/>
            <person name="Yuan S."/>
            <person name="Shinozaki K."/>
            <person name="Davis R.W."/>
            <person name="Theologis A."/>
            <person name="Ecker J.R."/>
        </authorList>
    </citation>
    <scope>NUCLEOTIDE SEQUENCE [LARGE SCALE MRNA]</scope>
    <source>
        <strain>cv. Columbia</strain>
    </source>
</reference>
<reference key="5">
    <citation type="submission" date="2002-03" db="EMBL/GenBank/DDBJ databases">
        <title>Full-length cDNA from Arabidopsis thaliana.</title>
        <authorList>
            <person name="Brover V.V."/>
            <person name="Troukhan M.E."/>
            <person name="Alexandrov N.A."/>
            <person name="Lu Y.-P."/>
            <person name="Flavell R.B."/>
            <person name="Feldmann K.A."/>
        </authorList>
    </citation>
    <scope>NUCLEOTIDE SEQUENCE [LARGE SCALE MRNA]</scope>
</reference>
<reference key="6">
    <citation type="journal article" date="2001" name="J. Biol. Chem.">
        <title>The Arabidopsis thaliana ABC protein superfamily, a complete inventory.</title>
        <authorList>
            <person name="Sanchez-Fernandez R."/>
            <person name="Davies T.G."/>
            <person name="Coleman J.O."/>
            <person name="Rea P.A."/>
        </authorList>
    </citation>
    <scope>GENE FAMILY</scope>
    <scope>NOMENCLATURE</scope>
</reference>
<reference key="7">
    <citation type="journal article" date="2008" name="Trends Plant Sci.">
        <title>Plant ABC proteins - a unified nomenclature and updated inventory.</title>
        <authorList>
            <person name="Verrier P.J."/>
            <person name="Bird D."/>
            <person name="Burla B."/>
            <person name="Dassa E."/>
            <person name="Forestier C."/>
            <person name="Geisler M."/>
            <person name="Klein M."/>
            <person name="Kolukisaoglu H.U."/>
            <person name="Lee Y."/>
            <person name="Martinoia E."/>
            <person name="Murphy A."/>
            <person name="Rea P.A."/>
            <person name="Samuels L."/>
            <person name="Schulz B."/>
            <person name="Spalding E.J."/>
            <person name="Yazaki K."/>
            <person name="Theodoulou F.L."/>
        </authorList>
    </citation>
    <scope>GENE FAMILY</scope>
    <scope>NOMENCLATURE</scope>
</reference>
<gene>
    <name type="primary">ABCI17</name>
    <name type="synonym">NAP3</name>
    <name type="ordered locus">At1g67940</name>
    <name type="ORF">T23K23.21</name>
</gene>
<feature type="chain" id="PRO_0000250655" description="ABC transporter I family member 17">
    <location>
        <begin position="1"/>
        <end position="263"/>
    </location>
</feature>
<feature type="domain" description="ABC transporter" evidence="1">
    <location>
        <begin position="29"/>
        <end position="260"/>
    </location>
</feature>
<feature type="binding site" evidence="1">
    <location>
        <begin position="62"/>
        <end position="69"/>
    </location>
    <ligand>
        <name>ATP</name>
        <dbReference type="ChEBI" id="CHEBI:30616"/>
    </ligand>
</feature>
<accession>Q9C9W0</accession>
<comment type="similarity">
    <text evidence="2">Belongs to the ABC transporter superfamily. ABCI family.</text>
</comment>
<sequence length="263" mass="28677">MPSLWSNESDGSLREHLVDVVVSGSEPKIRVHDLTRVADDGSRILKGVTIDIPKGMIVGVIGPSGSGKSTFLRSLNRLWEPPESTVFLDGEDITNVDVIALRRRVGMLFQLPVLFQGTVADNVRYGPNLRGEKLSDEEVYKLLSLADLDASFAKKTGAELSVGQAQRVALARTLANEPEVLLLDEPTSALDPISTENIEDVIVKLKKQRGITTVIVSHSIKQIQKVADIVCLVVDGEIVEVLKPSELSHATHPMAQRFLQLSS</sequence>
<keyword id="KW-0067">ATP-binding</keyword>
<keyword id="KW-0547">Nucleotide-binding</keyword>
<keyword id="KW-1185">Reference proteome</keyword>
<keyword id="KW-0813">Transport</keyword>
<evidence type="ECO:0000255" key="1">
    <source>
        <dbReference type="PROSITE-ProRule" id="PRU00434"/>
    </source>
</evidence>
<evidence type="ECO:0000305" key="2"/>
<protein>
    <recommendedName>
        <fullName>ABC transporter I family member 17</fullName>
        <shortName>ABC transporter ABCI.17</shortName>
        <shortName>AtABCI17</shortName>
    </recommendedName>
    <alternativeName>
        <fullName>MRP-related protein 1</fullName>
    </alternativeName>
    <alternativeName>
        <fullName>Non-intrinsic ABC protein 3</fullName>
    </alternativeName>
</protein>